<evidence type="ECO:0000250" key="1">
    <source>
        <dbReference type="UniProtKB" id="Q10MQ0"/>
    </source>
</evidence>
<evidence type="ECO:0000255" key="2"/>
<evidence type="ECO:0000255" key="3">
    <source>
        <dbReference type="PROSITE-ProRule" id="PRU00498"/>
    </source>
</evidence>
<evidence type="ECO:0000256" key="4">
    <source>
        <dbReference type="SAM" id="MobiDB-lite"/>
    </source>
</evidence>
<evidence type="ECO:0000269" key="5">
    <source>
    </source>
</evidence>
<evidence type="ECO:0000303" key="6">
    <source>
    </source>
</evidence>
<evidence type="ECO:0000305" key="7"/>
<evidence type="ECO:0000312" key="8">
    <source>
        <dbReference type="EMBL" id="ABF95525.1"/>
    </source>
</evidence>
<evidence type="ECO:0000312" key="9">
    <source>
        <dbReference type="EMBL" id="BAF11800.1"/>
    </source>
</evidence>
<evidence type="ECO:0000312" key="10">
    <source>
        <dbReference type="EMBL" id="EAZ26651.1"/>
    </source>
</evidence>
<sequence length="483" mass="54711">MSKLQDRHGGEAAADVGRRARHQRLLLSFPVFPIVLLLLAPCTIFFFTSGDVPLPRIRIEYARRDAPTITAVAADTSPPPPSPPSSSPPPLSFPPPPPPPSSPPPPALPVVDDHSDTQRSLRRLRQLTDSPYTLGPAVTGYDARRAEWLRDHTEFPASVGRGRPRVLMVTGSAPRRCKDPEGDHLLLRALKNKVDYCRVHGFDIFYSNTVLDAEMSGFWTKLPLLRALMLAHPETELLWWVDSDVVFTDMLFEPPWGRYRRHNLVIHGWDGAVYGAKTWLGLNAGSFIIRNCQWSLDLLDAWAPMGPPGPVRDMYGKIFAETLTNRPPYEADDQSALVFLLVTQRHRWGAKVFLENSYNLHGFWADIVDRYEEMRRQWRHPGLGDDRWPLITHFVGCKPCGGDDASYDGERCRRGMDRAFNFADDQILELYGFAHESLDTMAVRRVRNDTGRPLDADNQELGRLLHPTFKARKKKTSRAARPM</sequence>
<accession>Q10MK2</accession>
<accession>A0A0N7KH47</accession>
<proteinExistence type="evidence at transcript level"/>
<feature type="chain" id="PRO_0000434329" description="Probable glycosyltransferase 4">
    <location>
        <begin position="1"/>
        <end position="483"/>
    </location>
</feature>
<feature type="topological domain" description="Cytoplasmic" evidence="7">
    <location>
        <begin position="1"/>
        <end position="26"/>
    </location>
</feature>
<feature type="transmembrane region" description="Helical; Signal-anchor for type II membrane protein" evidence="2">
    <location>
        <begin position="27"/>
        <end position="47"/>
    </location>
</feature>
<feature type="topological domain" description="Lumenal" evidence="7">
    <location>
        <begin position="48"/>
        <end position="483"/>
    </location>
</feature>
<feature type="region of interest" description="Disordered" evidence="4">
    <location>
        <begin position="71"/>
        <end position="119"/>
    </location>
</feature>
<feature type="compositionally biased region" description="Pro residues" evidence="4">
    <location>
        <begin position="77"/>
        <end position="108"/>
    </location>
</feature>
<feature type="glycosylation site" description="N-linked (GlcNAc...) asparagine" evidence="3">
    <location>
        <position position="448"/>
    </location>
</feature>
<keyword id="KW-0325">Glycoprotein</keyword>
<keyword id="KW-0328">Glycosyltransferase</keyword>
<keyword id="KW-0333">Golgi apparatus</keyword>
<keyword id="KW-0472">Membrane</keyword>
<keyword id="KW-1185">Reference proteome</keyword>
<keyword id="KW-0735">Signal-anchor</keyword>
<keyword id="KW-0808">Transferase</keyword>
<keyword id="KW-0812">Transmembrane</keyword>
<keyword id="KW-1133">Transmembrane helix</keyword>
<name>GT4_ORYSJ</name>
<gene>
    <name evidence="6" type="primary">GT4</name>
    <name evidence="9" type="ordered locus">Os03g0305800</name>
    <name evidence="8" type="ordered locus">LOC_Os03g19310</name>
    <name evidence="10" type="ORF">OsJ_10555</name>
</gene>
<comment type="function">
    <text evidence="1">Probable glycosyltransferase that may be involved in the biosynthesis of xyloglucan.</text>
</comment>
<comment type="subcellular location">
    <subcellularLocation>
        <location evidence="7">Golgi apparatus membrane</location>
        <topology evidence="7">Single-pass type II membrane protein</topology>
    </subcellularLocation>
</comment>
<comment type="induction">
    <text evidence="5">By treatment with atrazine.</text>
</comment>
<comment type="similarity">
    <text evidence="7">Belongs to the glycosyltransferase 34 family.</text>
</comment>
<organism>
    <name type="scientific">Oryza sativa subsp. japonica</name>
    <name type="common">Rice</name>
    <dbReference type="NCBI Taxonomy" id="39947"/>
    <lineage>
        <taxon>Eukaryota</taxon>
        <taxon>Viridiplantae</taxon>
        <taxon>Streptophyta</taxon>
        <taxon>Embryophyta</taxon>
        <taxon>Tracheophyta</taxon>
        <taxon>Spermatophyta</taxon>
        <taxon>Magnoliopsida</taxon>
        <taxon>Liliopsida</taxon>
        <taxon>Poales</taxon>
        <taxon>Poaceae</taxon>
        <taxon>BOP clade</taxon>
        <taxon>Oryzoideae</taxon>
        <taxon>Oryzeae</taxon>
        <taxon>Oryzinae</taxon>
        <taxon>Oryza</taxon>
        <taxon>Oryza sativa</taxon>
    </lineage>
</organism>
<protein>
    <recommendedName>
        <fullName evidence="7">Probable glycosyltransferase 4</fullName>
        <shortName evidence="6">OsGT4</shortName>
        <ecNumber evidence="7">2.4.-.-</ecNumber>
    </recommendedName>
</protein>
<dbReference type="EC" id="2.4.-.-" evidence="7"/>
<dbReference type="EMBL" id="DP000009">
    <property type="protein sequence ID" value="ABF95525.1"/>
    <property type="molecule type" value="Genomic_DNA"/>
</dbReference>
<dbReference type="EMBL" id="AP008209">
    <property type="protein sequence ID" value="BAF11800.1"/>
    <property type="molecule type" value="Genomic_DNA"/>
</dbReference>
<dbReference type="EMBL" id="AP014959">
    <property type="protein sequence ID" value="BAS83809.1"/>
    <property type="molecule type" value="Genomic_DNA"/>
</dbReference>
<dbReference type="EMBL" id="CM000140">
    <property type="protein sequence ID" value="EAZ26651.1"/>
    <property type="molecule type" value="Genomic_DNA"/>
</dbReference>
<dbReference type="EMBL" id="AK105101">
    <property type="protein sequence ID" value="BAG97093.1"/>
    <property type="molecule type" value="mRNA"/>
</dbReference>
<dbReference type="RefSeq" id="XP_015630648.1">
    <property type="nucleotide sequence ID" value="XM_015775162.1"/>
</dbReference>
<dbReference type="SMR" id="Q10MK2"/>
<dbReference type="FunCoup" id="Q10MK2">
    <property type="interactions" value="3"/>
</dbReference>
<dbReference type="STRING" id="39947.Q10MK2"/>
<dbReference type="CAZy" id="GT34">
    <property type="family name" value="Glycosyltransferase Family 34"/>
</dbReference>
<dbReference type="GlyCosmos" id="Q10MK2">
    <property type="glycosylation" value="1 site, No reported glycans"/>
</dbReference>
<dbReference type="PaxDb" id="39947-Q10MK2"/>
<dbReference type="EnsemblPlants" id="Os03t0305800-02">
    <property type="protein sequence ID" value="Os03t0305800-02"/>
    <property type="gene ID" value="Os03g0305800"/>
</dbReference>
<dbReference type="Gramene" id="Os03t0305800-02">
    <property type="protein sequence ID" value="Os03t0305800-02"/>
    <property type="gene ID" value="Os03g0305800"/>
</dbReference>
<dbReference type="KEGG" id="dosa:Os03g0305800"/>
<dbReference type="eggNOG" id="KOG4748">
    <property type="taxonomic scope" value="Eukaryota"/>
</dbReference>
<dbReference type="HOGENOM" id="CLU_034328_1_1_1"/>
<dbReference type="InParanoid" id="Q10MK2"/>
<dbReference type="OMA" id="WQLPRIR"/>
<dbReference type="OrthoDB" id="205108at2759"/>
<dbReference type="PlantReactome" id="R-OSA-5655101">
    <property type="pathway name" value="Xyloglucan biosynthesis"/>
</dbReference>
<dbReference type="Proteomes" id="UP000000763">
    <property type="component" value="Chromosome 3"/>
</dbReference>
<dbReference type="Proteomes" id="UP000007752">
    <property type="component" value="Chromosome 3"/>
</dbReference>
<dbReference type="Proteomes" id="UP000059680">
    <property type="component" value="Chromosome 3"/>
</dbReference>
<dbReference type="GO" id="GO:0000139">
    <property type="term" value="C:Golgi membrane"/>
    <property type="evidence" value="ECO:0007669"/>
    <property type="project" value="UniProtKB-SubCell"/>
</dbReference>
<dbReference type="GO" id="GO:0016758">
    <property type="term" value="F:hexosyltransferase activity"/>
    <property type="evidence" value="ECO:0000318"/>
    <property type="project" value="GO_Central"/>
</dbReference>
<dbReference type="GO" id="GO:0035252">
    <property type="term" value="F:UDP-xylosyltransferase activity"/>
    <property type="evidence" value="ECO:0000318"/>
    <property type="project" value="GO_Central"/>
</dbReference>
<dbReference type="GO" id="GO:0033843">
    <property type="term" value="F:xyloglucan 6-xylosyltransferase activity"/>
    <property type="evidence" value="ECO:0000318"/>
    <property type="project" value="GO_Central"/>
</dbReference>
<dbReference type="GO" id="GO:0009969">
    <property type="term" value="P:xyloglucan biosynthetic process"/>
    <property type="evidence" value="ECO:0000318"/>
    <property type="project" value="GO_Central"/>
</dbReference>
<dbReference type="FunFam" id="3.90.550.10:FF:000101">
    <property type="entry name" value="Probable glycosyltransferase 5"/>
    <property type="match status" value="1"/>
</dbReference>
<dbReference type="Gene3D" id="3.90.550.10">
    <property type="entry name" value="Spore Coat Polysaccharide Biosynthesis Protein SpsA, Chain A"/>
    <property type="match status" value="1"/>
</dbReference>
<dbReference type="InterPro" id="IPR008630">
    <property type="entry name" value="Glyco_trans_34"/>
</dbReference>
<dbReference type="InterPro" id="IPR029044">
    <property type="entry name" value="Nucleotide-diphossugar_trans"/>
</dbReference>
<dbReference type="PANTHER" id="PTHR31311:SF22">
    <property type="entry name" value="GLYCOSYLTRANSFERASE 4-RELATED"/>
    <property type="match status" value="1"/>
</dbReference>
<dbReference type="PANTHER" id="PTHR31311">
    <property type="entry name" value="XYLOGLUCAN 6-XYLOSYLTRANSFERASE 5-RELATED-RELATED"/>
    <property type="match status" value="1"/>
</dbReference>
<dbReference type="Pfam" id="PF05637">
    <property type="entry name" value="Glyco_transf_34"/>
    <property type="match status" value="1"/>
</dbReference>
<reference key="1">
    <citation type="journal article" date="2005" name="Genome Res.">
        <title>Sequence, annotation, and analysis of synteny between rice chromosome 3 and diverged grass species.</title>
        <authorList>
            <consortium name="The rice chromosome 3 sequencing consortium"/>
            <person name="Buell C.R."/>
            <person name="Yuan Q."/>
            <person name="Ouyang S."/>
            <person name="Liu J."/>
            <person name="Zhu W."/>
            <person name="Wang A."/>
            <person name="Maiti R."/>
            <person name="Haas B."/>
            <person name="Wortman J."/>
            <person name="Pertea M."/>
            <person name="Jones K.M."/>
            <person name="Kim M."/>
            <person name="Overton L."/>
            <person name="Tsitrin T."/>
            <person name="Fadrosh D."/>
            <person name="Bera J."/>
            <person name="Weaver B."/>
            <person name="Jin S."/>
            <person name="Johri S."/>
            <person name="Reardon M."/>
            <person name="Webb K."/>
            <person name="Hill J."/>
            <person name="Moffat K."/>
            <person name="Tallon L."/>
            <person name="Van Aken S."/>
            <person name="Lewis M."/>
            <person name="Utterback T."/>
            <person name="Feldblyum T."/>
            <person name="Zismann V."/>
            <person name="Iobst S."/>
            <person name="Hsiao J."/>
            <person name="de Vazeille A.R."/>
            <person name="Salzberg S.L."/>
            <person name="White O."/>
            <person name="Fraser C.M."/>
            <person name="Yu Y."/>
            <person name="Kim H."/>
            <person name="Rambo T."/>
            <person name="Currie J."/>
            <person name="Collura K."/>
            <person name="Kernodle-Thompson S."/>
            <person name="Wei F."/>
            <person name="Kudrna K."/>
            <person name="Ammiraju J.S.S."/>
            <person name="Luo M."/>
            <person name="Goicoechea J.L."/>
            <person name="Wing R.A."/>
            <person name="Henry D."/>
            <person name="Oates R."/>
            <person name="Palmer M."/>
            <person name="Pries G."/>
            <person name="Saski C."/>
            <person name="Simmons J."/>
            <person name="Soderlund C."/>
            <person name="Nelson W."/>
            <person name="de la Bastide M."/>
            <person name="Spiegel L."/>
            <person name="Nascimento L."/>
            <person name="Huang E."/>
            <person name="Preston R."/>
            <person name="Zutavern T."/>
            <person name="Palmer L."/>
            <person name="O'Shaughnessy A."/>
            <person name="Dike S."/>
            <person name="McCombie W.R."/>
            <person name="Minx P."/>
            <person name="Cordum H."/>
            <person name="Wilson R."/>
            <person name="Jin W."/>
            <person name="Lee H.R."/>
            <person name="Jiang J."/>
            <person name="Jackson S."/>
        </authorList>
    </citation>
    <scope>NUCLEOTIDE SEQUENCE [LARGE SCALE GENOMIC DNA]</scope>
    <source>
        <strain>cv. Nipponbare</strain>
    </source>
</reference>
<reference key="2">
    <citation type="journal article" date="2005" name="Nature">
        <title>The map-based sequence of the rice genome.</title>
        <authorList>
            <consortium name="International rice genome sequencing project (IRGSP)"/>
        </authorList>
    </citation>
    <scope>NUCLEOTIDE SEQUENCE [LARGE SCALE GENOMIC DNA]</scope>
    <source>
        <strain>cv. Nipponbare</strain>
    </source>
</reference>
<reference key="3">
    <citation type="journal article" date="2008" name="Nucleic Acids Res.">
        <title>The rice annotation project database (RAP-DB): 2008 update.</title>
        <authorList>
            <consortium name="The rice annotation project (RAP)"/>
        </authorList>
    </citation>
    <scope>GENOME REANNOTATION</scope>
    <source>
        <strain>cv. Nipponbare</strain>
    </source>
</reference>
<reference key="4">
    <citation type="journal article" date="2013" name="Rice">
        <title>Improvement of the Oryza sativa Nipponbare reference genome using next generation sequence and optical map data.</title>
        <authorList>
            <person name="Kawahara Y."/>
            <person name="de la Bastide M."/>
            <person name="Hamilton J.P."/>
            <person name="Kanamori H."/>
            <person name="McCombie W.R."/>
            <person name="Ouyang S."/>
            <person name="Schwartz D.C."/>
            <person name="Tanaka T."/>
            <person name="Wu J."/>
            <person name="Zhou S."/>
            <person name="Childs K.L."/>
            <person name="Davidson R.M."/>
            <person name="Lin H."/>
            <person name="Quesada-Ocampo L."/>
            <person name="Vaillancourt B."/>
            <person name="Sakai H."/>
            <person name="Lee S.S."/>
            <person name="Kim J."/>
            <person name="Numa H."/>
            <person name="Itoh T."/>
            <person name="Buell C.R."/>
            <person name="Matsumoto T."/>
        </authorList>
    </citation>
    <scope>GENOME REANNOTATION</scope>
    <source>
        <strain>cv. Nipponbare</strain>
    </source>
</reference>
<reference key="5">
    <citation type="journal article" date="2005" name="PLoS Biol.">
        <title>The genomes of Oryza sativa: a history of duplications.</title>
        <authorList>
            <person name="Yu J."/>
            <person name="Wang J."/>
            <person name="Lin W."/>
            <person name="Li S."/>
            <person name="Li H."/>
            <person name="Zhou J."/>
            <person name="Ni P."/>
            <person name="Dong W."/>
            <person name="Hu S."/>
            <person name="Zeng C."/>
            <person name="Zhang J."/>
            <person name="Zhang Y."/>
            <person name="Li R."/>
            <person name="Xu Z."/>
            <person name="Li S."/>
            <person name="Li X."/>
            <person name="Zheng H."/>
            <person name="Cong L."/>
            <person name="Lin L."/>
            <person name="Yin J."/>
            <person name="Geng J."/>
            <person name="Li G."/>
            <person name="Shi J."/>
            <person name="Liu J."/>
            <person name="Lv H."/>
            <person name="Li J."/>
            <person name="Wang J."/>
            <person name="Deng Y."/>
            <person name="Ran L."/>
            <person name="Shi X."/>
            <person name="Wang X."/>
            <person name="Wu Q."/>
            <person name="Li C."/>
            <person name="Ren X."/>
            <person name="Wang J."/>
            <person name="Wang X."/>
            <person name="Li D."/>
            <person name="Liu D."/>
            <person name="Zhang X."/>
            <person name="Ji Z."/>
            <person name="Zhao W."/>
            <person name="Sun Y."/>
            <person name="Zhang Z."/>
            <person name="Bao J."/>
            <person name="Han Y."/>
            <person name="Dong L."/>
            <person name="Ji J."/>
            <person name="Chen P."/>
            <person name="Wu S."/>
            <person name="Liu J."/>
            <person name="Xiao Y."/>
            <person name="Bu D."/>
            <person name="Tan J."/>
            <person name="Yang L."/>
            <person name="Ye C."/>
            <person name="Zhang J."/>
            <person name="Xu J."/>
            <person name="Zhou Y."/>
            <person name="Yu Y."/>
            <person name="Zhang B."/>
            <person name="Zhuang S."/>
            <person name="Wei H."/>
            <person name="Liu B."/>
            <person name="Lei M."/>
            <person name="Yu H."/>
            <person name="Li Y."/>
            <person name="Xu H."/>
            <person name="Wei S."/>
            <person name="He X."/>
            <person name="Fang L."/>
            <person name="Zhang Z."/>
            <person name="Zhang Y."/>
            <person name="Huang X."/>
            <person name="Su Z."/>
            <person name="Tong W."/>
            <person name="Li J."/>
            <person name="Tong Z."/>
            <person name="Li S."/>
            <person name="Ye J."/>
            <person name="Wang L."/>
            <person name="Fang L."/>
            <person name="Lei T."/>
            <person name="Chen C.-S."/>
            <person name="Chen H.-C."/>
            <person name="Xu Z."/>
            <person name="Li H."/>
            <person name="Huang H."/>
            <person name="Zhang F."/>
            <person name="Xu H."/>
            <person name="Li N."/>
            <person name="Zhao C."/>
            <person name="Li S."/>
            <person name="Dong L."/>
            <person name="Huang Y."/>
            <person name="Li L."/>
            <person name="Xi Y."/>
            <person name="Qi Q."/>
            <person name="Li W."/>
            <person name="Zhang B."/>
            <person name="Hu W."/>
            <person name="Zhang Y."/>
            <person name="Tian X."/>
            <person name="Jiao Y."/>
            <person name="Liang X."/>
            <person name="Jin J."/>
            <person name="Gao L."/>
            <person name="Zheng W."/>
            <person name="Hao B."/>
            <person name="Liu S.-M."/>
            <person name="Wang W."/>
            <person name="Yuan L."/>
            <person name="Cao M."/>
            <person name="McDermott J."/>
            <person name="Samudrala R."/>
            <person name="Wang J."/>
            <person name="Wong G.K.-S."/>
            <person name="Yang H."/>
        </authorList>
    </citation>
    <scope>NUCLEOTIDE SEQUENCE [LARGE SCALE GENOMIC DNA]</scope>
    <source>
        <strain>cv. Nipponbare</strain>
    </source>
</reference>
<reference key="6">
    <citation type="journal article" date="2003" name="Science">
        <title>Collection, mapping, and annotation of over 28,000 cDNA clones from japonica rice.</title>
        <authorList>
            <consortium name="The rice full-length cDNA consortium"/>
        </authorList>
    </citation>
    <scope>NUCLEOTIDE SEQUENCE [LARGE SCALE MRNA]</scope>
    <source>
        <strain>cv. Nipponbare</strain>
    </source>
</reference>
<reference key="7">
    <citation type="journal article" date="2013" name="Gene">
        <title>A collection of glycosyltransferases from rice (Oryza sativa) exposed to atrazine.</title>
        <authorList>
            <person name="Lu Y.C."/>
            <person name="Yang S.N."/>
            <person name="Zhang J.J."/>
            <person name="Zhang J.J."/>
            <person name="Tan L.R."/>
            <person name="Yang H."/>
        </authorList>
    </citation>
    <scope>INDUCTION BY ATRAZINE</scope>
</reference>
<reference key="8">
    <citation type="journal article" date="2014" name="J. Exp. Bot.">
        <title>Mutation in xyloglucan 6-xylosytransferase results in abnormal root hair development in Oryza sativa.</title>
        <authorList>
            <person name="Wang C."/>
            <person name="Li S."/>
            <person name="Ng S."/>
            <person name="Zhang B."/>
            <person name="Zhou Y."/>
            <person name="Whelan J."/>
            <person name="Wu P."/>
            <person name="Shou H."/>
        </authorList>
    </citation>
    <scope>NOMENCLATURE</scope>
</reference>